<feature type="chain" id="PRO_0000353248" description="Photosystem II reaction center protein L">
    <location>
        <begin position="1"/>
        <end position="39"/>
    </location>
</feature>
<feature type="transmembrane region" description="Helical" evidence="1">
    <location>
        <begin position="18"/>
        <end position="38"/>
    </location>
</feature>
<comment type="function">
    <text evidence="1">One of the components of the core complex of photosystem II (PSII). PSII is a light-driven water:plastoquinone oxidoreductase that uses light energy to abstract electrons from H(2)O, generating O(2) and a proton gradient subsequently used for ATP formation. It consists of a core antenna complex that captures photons, and an electron transfer chain that converts photonic excitation into a charge separation. This subunit is found at the monomer-monomer interface and is required for correct PSII assembly and/or dimerization.</text>
</comment>
<comment type="subunit">
    <text evidence="1">PSII is composed of 1 copy each of membrane proteins PsbA, PsbB, PsbC, PsbD, PsbE, PsbF, PsbH, PsbI, PsbJ, PsbK, PsbL, PsbM, PsbT, PsbX, PsbY, PsbZ, Psb30/Ycf12, peripheral proteins PsbO, CyanoQ (PsbQ), PsbU, PsbV and a large number of cofactors. It forms dimeric complexes.</text>
</comment>
<comment type="subcellular location">
    <subcellularLocation>
        <location evidence="1">Cellular thylakoid membrane</location>
        <topology evidence="1">Single-pass membrane protein</topology>
    </subcellularLocation>
</comment>
<comment type="similarity">
    <text evidence="1">Belongs to the PsbL family.</text>
</comment>
<comment type="sequence caution" evidence="2">
    <conflict type="erroneous initiation">
        <sequence resource="EMBL-CDS" id="BAG03123"/>
    </conflict>
    <text>Extended N-terminus.</text>
</comment>
<evidence type="ECO:0000255" key="1">
    <source>
        <dbReference type="HAMAP-Rule" id="MF_01317"/>
    </source>
</evidence>
<evidence type="ECO:0000305" key="2"/>
<protein>
    <recommendedName>
        <fullName evidence="1">Photosystem II reaction center protein L</fullName>
        <shortName evidence="1">PSII-L</shortName>
    </recommendedName>
</protein>
<organism>
    <name type="scientific">Microcystis aeruginosa (strain NIES-843 / IAM M-2473)</name>
    <dbReference type="NCBI Taxonomy" id="449447"/>
    <lineage>
        <taxon>Bacteria</taxon>
        <taxon>Bacillati</taxon>
        <taxon>Cyanobacteriota</taxon>
        <taxon>Cyanophyceae</taxon>
        <taxon>Oscillatoriophycideae</taxon>
        <taxon>Chroococcales</taxon>
        <taxon>Microcystaceae</taxon>
        <taxon>Microcystis</taxon>
    </lineage>
</organism>
<keyword id="KW-0472">Membrane</keyword>
<keyword id="KW-0602">Photosynthesis</keyword>
<keyword id="KW-0604">Photosystem II</keyword>
<keyword id="KW-0674">Reaction center</keyword>
<keyword id="KW-0793">Thylakoid</keyword>
<keyword id="KW-0812">Transmembrane</keyword>
<keyword id="KW-1133">Transmembrane helix</keyword>
<dbReference type="EMBL" id="AP009552">
    <property type="protein sequence ID" value="BAG03123.1"/>
    <property type="status" value="ALT_INIT"/>
    <property type="molecule type" value="Genomic_DNA"/>
</dbReference>
<dbReference type="RefSeq" id="WP_002735805.1">
    <property type="nucleotide sequence ID" value="NC_010296.1"/>
</dbReference>
<dbReference type="SMR" id="B0JLU9"/>
<dbReference type="STRING" id="449447.MAE_33010"/>
<dbReference type="PaxDb" id="449447-MAE_33010"/>
<dbReference type="EnsemblBacteria" id="BAG03123">
    <property type="protein sequence ID" value="BAG03123"/>
    <property type="gene ID" value="MAE_33010"/>
</dbReference>
<dbReference type="KEGG" id="mar:MAE_33010"/>
<dbReference type="eggNOG" id="ENOG5033AKP">
    <property type="taxonomic scope" value="Bacteria"/>
</dbReference>
<dbReference type="HOGENOM" id="CLU_214425_0_0_3"/>
<dbReference type="BioCyc" id="MAER449447:MAE_RS29755-MONOMER"/>
<dbReference type="Proteomes" id="UP000001510">
    <property type="component" value="Chromosome"/>
</dbReference>
<dbReference type="GO" id="GO:0009539">
    <property type="term" value="C:photosystem II reaction center"/>
    <property type="evidence" value="ECO:0007669"/>
    <property type="project" value="InterPro"/>
</dbReference>
<dbReference type="GO" id="GO:0031676">
    <property type="term" value="C:plasma membrane-derived thylakoid membrane"/>
    <property type="evidence" value="ECO:0007669"/>
    <property type="project" value="UniProtKB-SubCell"/>
</dbReference>
<dbReference type="GO" id="GO:0015979">
    <property type="term" value="P:photosynthesis"/>
    <property type="evidence" value="ECO:0007669"/>
    <property type="project" value="UniProtKB-UniRule"/>
</dbReference>
<dbReference type="HAMAP" id="MF_01317">
    <property type="entry name" value="PSII_PsbL"/>
    <property type="match status" value="1"/>
</dbReference>
<dbReference type="InterPro" id="IPR003372">
    <property type="entry name" value="PSII_PsbL"/>
</dbReference>
<dbReference type="InterPro" id="IPR037266">
    <property type="entry name" value="PSII_PsbL_sf"/>
</dbReference>
<dbReference type="NCBIfam" id="NF001972">
    <property type="entry name" value="PRK00753.1"/>
    <property type="match status" value="1"/>
</dbReference>
<dbReference type="Pfam" id="PF02419">
    <property type="entry name" value="PsbL"/>
    <property type="match status" value="1"/>
</dbReference>
<dbReference type="SUPFAM" id="SSF161017">
    <property type="entry name" value="Photosystem II reaction center protein L, PsbL"/>
    <property type="match status" value="1"/>
</dbReference>
<name>PSBL_MICAN</name>
<accession>B0JLU9</accession>
<gene>
    <name evidence="1" type="primary">psbL</name>
    <name type="ordered locus">MAE_33010</name>
</gene>
<sequence length="39" mass="4458">MERTPNPNRQAVELNRTSLYLGLLLVAVLGILFSSYFFN</sequence>
<reference key="1">
    <citation type="journal article" date="2007" name="DNA Res.">
        <title>Complete genomic structure of the bloom-forming toxic cyanobacterium Microcystis aeruginosa NIES-843.</title>
        <authorList>
            <person name="Kaneko T."/>
            <person name="Nakajima N."/>
            <person name="Okamoto S."/>
            <person name="Suzuki I."/>
            <person name="Tanabe Y."/>
            <person name="Tamaoki M."/>
            <person name="Nakamura Y."/>
            <person name="Kasai F."/>
            <person name="Watanabe A."/>
            <person name="Kawashima K."/>
            <person name="Kishida Y."/>
            <person name="Ono A."/>
            <person name="Shimizu Y."/>
            <person name="Takahashi C."/>
            <person name="Minami C."/>
            <person name="Fujishiro T."/>
            <person name="Kohara M."/>
            <person name="Katoh M."/>
            <person name="Nakazaki N."/>
            <person name="Nakayama S."/>
            <person name="Yamada M."/>
            <person name="Tabata S."/>
            <person name="Watanabe M.M."/>
        </authorList>
    </citation>
    <scope>NUCLEOTIDE SEQUENCE [LARGE SCALE GENOMIC DNA]</scope>
    <source>
        <strain>NIES-843 / IAM M-247</strain>
    </source>
</reference>
<proteinExistence type="inferred from homology"/>